<keyword id="KW-0963">Cytoplasm</keyword>
<keyword id="KW-0255">Endonuclease</keyword>
<keyword id="KW-0378">Hydrolase</keyword>
<keyword id="KW-0460">Magnesium</keyword>
<keyword id="KW-0479">Metal-binding</keyword>
<keyword id="KW-0540">Nuclease</keyword>
<reference key="1">
    <citation type="journal article" date="2004" name="Nat. Biotechnol.">
        <title>Complete genome sequence of the metabolically versatile photosynthetic bacterium Rhodopseudomonas palustris.</title>
        <authorList>
            <person name="Larimer F.W."/>
            <person name="Chain P."/>
            <person name="Hauser L."/>
            <person name="Lamerdin J.E."/>
            <person name="Malfatti S."/>
            <person name="Do L."/>
            <person name="Land M.L."/>
            <person name="Pelletier D.A."/>
            <person name="Beatty J.T."/>
            <person name="Lang A.S."/>
            <person name="Tabita F.R."/>
            <person name="Gibson J.L."/>
            <person name="Hanson T.E."/>
            <person name="Bobst C."/>
            <person name="Torres y Torres J.L."/>
            <person name="Peres C."/>
            <person name="Harrison F.H."/>
            <person name="Gibson J."/>
            <person name="Harwood C.S."/>
        </authorList>
    </citation>
    <scope>NUCLEOTIDE SEQUENCE [LARGE SCALE GENOMIC DNA]</scope>
    <source>
        <strain>ATCC BAA-98 / CGA009</strain>
    </source>
</reference>
<evidence type="ECO:0000255" key="1">
    <source>
        <dbReference type="HAMAP-Rule" id="MF_00042"/>
    </source>
</evidence>
<evidence type="ECO:0000255" key="2">
    <source>
        <dbReference type="PROSITE-ProRule" id="PRU00408"/>
    </source>
</evidence>
<evidence type="ECO:0000256" key="3">
    <source>
        <dbReference type="SAM" id="MobiDB-lite"/>
    </source>
</evidence>
<organism>
    <name type="scientific">Rhodopseudomonas palustris (strain ATCC BAA-98 / CGA009)</name>
    <dbReference type="NCBI Taxonomy" id="258594"/>
    <lineage>
        <taxon>Bacteria</taxon>
        <taxon>Pseudomonadati</taxon>
        <taxon>Pseudomonadota</taxon>
        <taxon>Alphaproteobacteria</taxon>
        <taxon>Hyphomicrobiales</taxon>
        <taxon>Nitrobacteraceae</taxon>
        <taxon>Rhodopseudomonas</taxon>
    </lineage>
</organism>
<dbReference type="EC" id="3.1.26.4" evidence="1"/>
<dbReference type="EMBL" id="BX572606">
    <property type="protein sequence ID" value="CAE29710.1"/>
    <property type="molecule type" value="Genomic_DNA"/>
</dbReference>
<dbReference type="RefSeq" id="WP_011159804.1">
    <property type="nucleotide sequence ID" value="NZ_CP116810.1"/>
</dbReference>
<dbReference type="SMR" id="Q6N1Y3"/>
<dbReference type="STRING" id="258594.RPA4269"/>
<dbReference type="GeneID" id="66895395"/>
<dbReference type="eggNOG" id="COG0328">
    <property type="taxonomic scope" value="Bacteria"/>
</dbReference>
<dbReference type="HOGENOM" id="CLU_030894_6_0_5"/>
<dbReference type="PhylomeDB" id="Q6N1Y3"/>
<dbReference type="GO" id="GO:0005737">
    <property type="term" value="C:cytoplasm"/>
    <property type="evidence" value="ECO:0007669"/>
    <property type="project" value="UniProtKB-SubCell"/>
</dbReference>
<dbReference type="GO" id="GO:0000287">
    <property type="term" value="F:magnesium ion binding"/>
    <property type="evidence" value="ECO:0007669"/>
    <property type="project" value="UniProtKB-UniRule"/>
</dbReference>
<dbReference type="GO" id="GO:0003676">
    <property type="term" value="F:nucleic acid binding"/>
    <property type="evidence" value="ECO:0007669"/>
    <property type="project" value="InterPro"/>
</dbReference>
<dbReference type="GO" id="GO:0004523">
    <property type="term" value="F:RNA-DNA hybrid ribonuclease activity"/>
    <property type="evidence" value="ECO:0007669"/>
    <property type="project" value="UniProtKB-UniRule"/>
</dbReference>
<dbReference type="GO" id="GO:0043137">
    <property type="term" value="P:DNA replication, removal of RNA primer"/>
    <property type="evidence" value="ECO:0007669"/>
    <property type="project" value="TreeGrafter"/>
</dbReference>
<dbReference type="CDD" id="cd09278">
    <property type="entry name" value="RNase_HI_prokaryote_like"/>
    <property type="match status" value="1"/>
</dbReference>
<dbReference type="FunFam" id="3.30.420.10:FF:000008">
    <property type="entry name" value="Ribonuclease H"/>
    <property type="match status" value="1"/>
</dbReference>
<dbReference type="Gene3D" id="3.30.420.10">
    <property type="entry name" value="Ribonuclease H-like superfamily/Ribonuclease H"/>
    <property type="match status" value="1"/>
</dbReference>
<dbReference type="HAMAP" id="MF_00042">
    <property type="entry name" value="RNase_H"/>
    <property type="match status" value="1"/>
</dbReference>
<dbReference type="InterPro" id="IPR050092">
    <property type="entry name" value="RNase_H"/>
</dbReference>
<dbReference type="InterPro" id="IPR012337">
    <property type="entry name" value="RNaseH-like_sf"/>
</dbReference>
<dbReference type="InterPro" id="IPR002156">
    <property type="entry name" value="RNaseH_domain"/>
</dbReference>
<dbReference type="InterPro" id="IPR036397">
    <property type="entry name" value="RNaseH_sf"/>
</dbReference>
<dbReference type="InterPro" id="IPR022892">
    <property type="entry name" value="RNaseHI"/>
</dbReference>
<dbReference type="NCBIfam" id="NF001236">
    <property type="entry name" value="PRK00203.1"/>
    <property type="match status" value="1"/>
</dbReference>
<dbReference type="PANTHER" id="PTHR10642">
    <property type="entry name" value="RIBONUCLEASE H1"/>
    <property type="match status" value="1"/>
</dbReference>
<dbReference type="PANTHER" id="PTHR10642:SF26">
    <property type="entry name" value="RIBONUCLEASE H1"/>
    <property type="match status" value="1"/>
</dbReference>
<dbReference type="Pfam" id="PF00075">
    <property type="entry name" value="RNase_H"/>
    <property type="match status" value="1"/>
</dbReference>
<dbReference type="SUPFAM" id="SSF53098">
    <property type="entry name" value="Ribonuclease H-like"/>
    <property type="match status" value="1"/>
</dbReference>
<dbReference type="PROSITE" id="PS50879">
    <property type="entry name" value="RNASE_H_1"/>
    <property type="match status" value="1"/>
</dbReference>
<accession>Q6N1Y3</accession>
<feature type="chain" id="PRO_0000332666" description="Ribonuclease H">
    <location>
        <begin position="1"/>
        <end position="155"/>
    </location>
</feature>
<feature type="domain" description="RNase H type-1" evidence="2">
    <location>
        <begin position="5"/>
        <end position="146"/>
    </location>
</feature>
<feature type="region of interest" description="Disordered" evidence="3">
    <location>
        <begin position="133"/>
        <end position="155"/>
    </location>
</feature>
<feature type="binding site" evidence="1">
    <location>
        <position position="14"/>
    </location>
    <ligand>
        <name>Mg(2+)</name>
        <dbReference type="ChEBI" id="CHEBI:18420"/>
        <label>1</label>
    </ligand>
</feature>
<feature type="binding site" evidence="1">
    <location>
        <position position="14"/>
    </location>
    <ligand>
        <name>Mg(2+)</name>
        <dbReference type="ChEBI" id="CHEBI:18420"/>
        <label>2</label>
    </ligand>
</feature>
<feature type="binding site" evidence="1">
    <location>
        <position position="52"/>
    </location>
    <ligand>
        <name>Mg(2+)</name>
        <dbReference type="ChEBI" id="CHEBI:18420"/>
        <label>1</label>
    </ligand>
</feature>
<feature type="binding site" evidence="1">
    <location>
        <position position="74"/>
    </location>
    <ligand>
        <name>Mg(2+)</name>
        <dbReference type="ChEBI" id="CHEBI:18420"/>
        <label>1</label>
    </ligand>
</feature>
<feature type="binding site" evidence="1">
    <location>
        <position position="138"/>
    </location>
    <ligand>
        <name>Mg(2+)</name>
        <dbReference type="ChEBI" id="CHEBI:18420"/>
        <label>2</label>
    </ligand>
</feature>
<proteinExistence type="inferred from homology"/>
<gene>
    <name evidence="1" type="primary">rnhA</name>
    <name type="ordered locus">RPA4269</name>
</gene>
<protein>
    <recommendedName>
        <fullName evidence="1">Ribonuclease H</fullName>
        <shortName evidence="1">RNase H</shortName>
        <ecNumber evidence="1">3.1.26.4</ecNumber>
    </recommendedName>
</protein>
<name>RNH_RHOPA</name>
<comment type="function">
    <text evidence="1">Endonuclease that specifically degrades the RNA of RNA-DNA hybrids.</text>
</comment>
<comment type="catalytic activity">
    <reaction evidence="1">
        <text>Endonucleolytic cleavage to 5'-phosphomonoester.</text>
        <dbReference type="EC" id="3.1.26.4"/>
    </reaction>
</comment>
<comment type="cofactor">
    <cofactor evidence="1">
        <name>Mg(2+)</name>
        <dbReference type="ChEBI" id="CHEBI:18420"/>
    </cofactor>
    <text evidence="1">Binds 1 Mg(2+) ion per subunit. May bind a second metal ion at a regulatory site, or after substrate binding.</text>
</comment>
<comment type="subunit">
    <text evidence="1">Monomer.</text>
</comment>
<comment type="subcellular location">
    <subcellularLocation>
        <location evidence="1">Cytoplasm</location>
    </subcellularLocation>
</comment>
<comment type="similarity">
    <text evidence="1">Belongs to the RNase H family.</text>
</comment>
<sequence>MSEADQKPVIIHTDGACSGNPGPGGWGAILKFGDVEKELKGGEPHTTNNRMELLAAISALEALTRPCSVDLYTDSQYVKNGIGSWIHNWKRNGWKTADKKPVKNVDLWQRLDAALKTHSIRWHWVKGHAGHAENERADQLARDGLTENRMKSRVK</sequence>